<feature type="chain" id="PRO_0000396017" description="EID1-like F-box protein 1">
    <location>
        <begin position="1"/>
        <end position="293"/>
    </location>
</feature>
<feature type="domain" description="F-box">
    <location>
        <begin position="16"/>
        <end position="68"/>
    </location>
</feature>
<feature type="region of interest" description="Disordered" evidence="1">
    <location>
        <begin position="245"/>
        <end position="293"/>
    </location>
</feature>
<feature type="compositionally biased region" description="Basic and acidic residues" evidence="1">
    <location>
        <begin position="250"/>
        <end position="259"/>
    </location>
</feature>
<keyword id="KW-1185">Reference proteome</keyword>
<evidence type="ECO:0000256" key="1">
    <source>
        <dbReference type="SAM" id="MobiDB-lite"/>
    </source>
</evidence>
<reference key="1">
    <citation type="journal article" date="2000" name="Nature">
        <title>Sequence and analysis of chromosome 5 of the plant Arabidopsis thaliana.</title>
        <authorList>
            <person name="Tabata S."/>
            <person name="Kaneko T."/>
            <person name="Nakamura Y."/>
            <person name="Kotani H."/>
            <person name="Kato T."/>
            <person name="Asamizu E."/>
            <person name="Miyajima N."/>
            <person name="Sasamoto S."/>
            <person name="Kimura T."/>
            <person name="Hosouchi T."/>
            <person name="Kawashima K."/>
            <person name="Kohara M."/>
            <person name="Matsumoto M."/>
            <person name="Matsuno A."/>
            <person name="Muraki A."/>
            <person name="Nakayama S."/>
            <person name="Nakazaki N."/>
            <person name="Naruo K."/>
            <person name="Okumura S."/>
            <person name="Shinpo S."/>
            <person name="Takeuchi C."/>
            <person name="Wada T."/>
            <person name="Watanabe A."/>
            <person name="Yamada M."/>
            <person name="Yasuda M."/>
            <person name="Sato S."/>
            <person name="de la Bastide M."/>
            <person name="Huang E."/>
            <person name="Spiegel L."/>
            <person name="Gnoj L."/>
            <person name="O'Shaughnessy A."/>
            <person name="Preston R."/>
            <person name="Habermann K."/>
            <person name="Murray J."/>
            <person name="Johnson D."/>
            <person name="Rohlfing T."/>
            <person name="Nelson J."/>
            <person name="Stoneking T."/>
            <person name="Pepin K."/>
            <person name="Spieth J."/>
            <person name="Sekhon M."/>
            <person name="Armstrong J."/>
            <person name="Becker M."/>
            <person name="Belter E."/>
            <person name="Cordum H."/>
            <person name="Cordes M."/>
            <person name="Courtney L."/>
            <person name="Courtney W."/>
            <person name="Dante M."/>
            <person name="Du H."/>
            <person name="Edwards J."/>
            <person name="Fryman J."/>
            <person name="Haakensen B."/>
            <person name="Lamar E."/>
            <person name="Latreille P."/>
            <person name="Leonard S."/>
            <person name="Meyer R."/>
            <person name="Mulvaney E."/>
            <person name="Ozersky P."/>
            <person name="Riley A."/>
            <person name="Strowmatt C."/>
            <person name="Wagner-McPherson C."/>
            <person name="Wollam A."/>
            <person name="Yoakum M."/>
            <person name="Bell M."/>
            <person name="Dedhia N."/>
            <person name="Parnell L."/>
            <person name="Shah R."/>
            <person name="Rodriguez M."/>
            <person name="Hoon See L."/>
            <person name="Vil D."/>
            <person name="Baker J."/>
            <person name="Kirchoff K."/>
            <person name="Toth K."/>
            <person name="King L."/>
            <person name="Bahret A."/>
            <person name="Miller B."/>
            <person name="Marra M.A."/>
            <person name="Martienssen R."/>
            <person name="McCombie W.R."/>
            <person name="Wilson R.K."/>
            <person name="Murphy G."/>
            <person name="Bancroft I."/>
            <person name="Volckaert G."/>
            <person name="Wambutt R."/>
            <person name="Duesterhoeft A."/>
            <person name="Stiekema W."/>
            <person name="Pohl T."/>
            <person name="Entian K.-D."/>
            <person name="Terryn N."/>
            <person name="Hartley N."/>
            <person name="Bent E."/>
            <person name="Johnson S."/>
            <person name="Langham S.-A."/>
            <person name="McCullagh B."/>
            <person name="Robben J."/>
            <person name="Grymonprez B."/>
            <person name="Zimmermann W."/>
            <person name="Ramsperger U."/>
            <person name="Wedler H."/>
            <person name="Balke K."/>
            <person name="Wedler E."/>
            <person name="Peters S."/>
            <person name="van Staveren M."/>
            <person name="Dirkse W."/>
            <person name="Mooijman P."/>
            <person name="Klein Lankhorst R."/>
            <person name="Weitzenegger T."/>
            <person name="Bothe G."/>
            <person name="Rose M."/>
            <person name="Hauf J."/>
            <person name="Berneiser S."/>
            <person name="Hempel S."/>
            <person name="Feldpausch M."/>
            <person name="Lamberth S."/>
            <person name="Villarroel R."/>
            <person name="Gielen J."/>
            <person name="Ardiles W."/>
            <person name="Bents O."/>
            <person name="Lemcke K."/>
            <person name="Kolesov G."/>
            <person name="Mayer K.F.X."/>
            <person name="Rudd S."/>
            <person name="Schoof H."/>
            <person name="Schueller C."/>
            <person name="Zaccaria P."/>
            <person name="Mewes H.-W."/>
            <person name="Bevan M."/>
            <person name="Fransz P.F."/>
        </authorList>
    </citation>
    <scope>NUCLEOTIDE SEQUENCE [LARGE SCALE GENOMIC DNA]</scope>
    <source>
        <strain>cv. Columbia</strain>
    </source>
</reference>
<reference key="2">
    <citation type="journal article" date="2017" name="Plant J.">
        <title>Araport11: a complete reannotation of the Arabidopsis thaliana reference genome.</title>
        <authorList>
            <person name="Cheng C.Y."/>
            <person name="Krishnakumar V."/>
            <person name="Chan A.P."/>
            <person name="Thibaud-Nissen F."/>
            <person name="Schobel S."/>
            <person name="Town C.D."/>
        </authorList>
    </citation>
    <scope>GENOME REANNOTATION</scope>
    <source>
        <strain>cv. Columbia</strain>
    </source>
</reference>
<reference key="3">
    <citation type="submission" date="2004-07" db="EMBL/GenBank/DDBJ databases">
        <title>Arabidopsis ORF clones.</title>
        <authorList>
            <person name="Kim C.J."/>
            <person name="Chen H."/>
            <person name="Cheuk R."/>
            <person name="Shinn P."/>
            <person name="Ecker J.R."/>
        </authorList>
    </citation>
    <scope>NUCLEOTIDE SEQUENCE [LARGE SCALE MRNA]</scope>
    <source>
        <strain>cv. Columbia</strain>
    </source>
</reference>
<reference key="4">
    <citation type="submission" date="2006-07" db="EMBL/GenBank/DDBJ databases">
        <title>Large-scale analysis of RIKEN Arabidopsis full-length (RAFL) cDNAs.</title>
        <authorList>
            <person name="Totoki Y."/>
            <person name="Seki M."/>
            <person name="Ishida J."/>
            <person name="Nakajima M."/>
            <person name="Enju A."/>
            <person name="Kamiya A."/>
            <person name="Narusaka M."/>
            <person name="Shin-i T."/>
            <person name="Nakagawa M."/>
            <person name="Sakamoto N."/>
            <person name="Oishi K."/>
            <person name="Kohara Y."/>
            <person name="Kobayashi M."/>
            <person name="Toyoda A."/>
            <person name="Sakaki Y."/>
            <person name="Sakurai T."/>
            <person name="Iida K."/>
            <person name="Akiyama K."/>
            <person name="Satou M."/>
            <person name="Toyoda T."/>
            <person name="Konagaya A."/>
            <person name="Carninci P."/>
            <person name="Kawai J."/>
            <person name="Hayashizaki Y."/>
            <person name="Shinozaki K."/>
        </authorList>
    </citation>
    <scope>NUCLEOTIDE SEQUENCE [LARGE SCALE MRNA]</scope>
    <source>
        <strain>cv. Columbia</strain>
    </source>
</reference>
<gene>
    <name type="primary">EDL1</name>
    <name type="ordered locus">At5g15440</name>
    <name type="ORF">T20K14.50</name>
</gene>
<proteinExistence type="evidence at transcript level"/>
<name>EDL1_ARATH</name>
<accession>Q9LF38</accession>
<sequence length="293" mass="33095">MILPKQYCCTHSPSCQCTKGHLNEDVLLLVFQHLNWNPKLVATLSCVCRWFDDFAKRVLWKEFCKTRAPKMMLDLQSSGSHCIDGNWRALGKLLIYCSGCTQGGLFNSSVQIPGHFVYRTRFSRTLGRSLLPPQCRTDVLYVCDPCEHLDQGEEGDVGLFRGIFKSFPTSKVRKVIINKAVPFHPSEVCPYCKAKLWSMLQAKIIPQSACIRLEAYEDCIEYFVCLNGHLLGICTLAPLSDSEDAIPSEDNNHTEKKQDNGFPRENVLKRRNSLLGGSENGPPPQKRLTNPNQ</sequence>
<protein>
    <recommendedName>
        <fullName>EID1-like F-box protein 1</fullName>
    </recommendedName>
</protein>
<dbReference type="EMBL" id="AL391143">
    <property type="protein sequence ID" value="CAC01743.1"/>
    <property type="molecule type" value="Genomic_DNA"/>
</dbReference>
<dbReference type="EMBL" id="CP002688">
    <property type="protein sequence ID" value="AED92161.1"/>
    <property type="molecule type" value="Genomic_DNA"/>
</dbReference>
<dbReference type="EMBL" id="BT014972">
    <property type="protein sequence ID" value="AAT70423.1"/>
    <property type="molecule type" value="mRNA"/>
</dbReference>
<dbReference type="EMBL" id="AK226950">
    <property type="protein sequence ID" value="BAE99020.1"/>
    <property type="molecule type" value="mRNA"/>
</dbReference>
<dbReference type="PIR" id="T51522">
    <property type="entry name" value="T51522"/>
</dbReference>
<dbReference type="RefSeq" id="NP_197048.1">
    <property type="nucleotide sequence ID" value="NM_121548.3"/>
</dbReference>
<dbReference type="FunCoup" id="Q9LF38">
    <property type="interactions" value="17"/>
</dbReference>
<dbReference type="STRING" id="3702.Q9LF38"/>
<dbReference type="iPTMnet" id="Q9LF38"/>
<dbReference type="PaxDb" id="3702-AT5G15440.1"/>
<dbReference type="ProteomicsDB" id="222064"/>
<dbReference type="EnsemblPlants" id="AT5G15440.1">
    <property type="protein sequence ID" value="AT5G15440.1"/>
    <property type="gene ID" value="AT5G15440"/>
</dbReference>
<dbReference type="GeneID" id="831397"/>
<dbReference type="Gramene" id="AT5G15440.1">
    <property type="protein sequence ID" value="AT5G15440.1"/>
    <property type="gene ID" value="AT5G15440"/>
</dbReference>
<dbReference type="KEGG" id="ath:AT5G15440"/>
<dbReference type="Araport" id="AT5G15440"/>
<dbReference type="TAIR" id="AT5G15440">
    <property type="gene designation" value="EDL1"/>
</dbReference>
<dbReference type="eggNOG" id="ENOG502QQXG">
    <property type="taxonomic scope" value="Eukaryota"/>
</dbReference>
<dbReference type="HOGENOM" id="CLU_065460_0_0_1"/>
<dbReference type="InParanoid" id="Q9LF38"/>
<dbReference type="OMA" id="CTHSPSC"/>
<dbReference type="PhylomeDB" id="Q9LF38"/>
<dbReference type="PRO" id="PR:Q9LF38"/>
<dbReference type="Proteomes" id="UP000006548">
    <property type="component" value="Chromosome 5"/>
</dbReference>
<dbReference type="ExpressionAtlas" id="Q9LF38">
    <property type="expression patterns" value="baseline and differential"/>
</dbReference>
<dbReference type="InterPro" id="IPR040267">
    <property type="entry name" value="EID1-like"/>
</dbReference>
<dbReference type="InterPro" id="IPR036047">
    <property type="entry name" value="F-box-like_dom_sf"/>
</dbReference>
<dbReference type="PANTHER" id="PTHR31348:SF2">
    <property type="entry name" value="EID1-LIKE F-BOX PROTEIN 1"/>
    <property type="match status" value="1"/>
</dbReference>
<dbReference type="PANTHER" id="PTHR31348">
    <property type="entry name" value="EID1-LIKE F-BOX PROTEIN 2-RELATED"/>
    <property type="match status" value="1"/>
</dbReference>
<dbReference type="SUPFAM" id="SSF81383">
    <property type="entry name" value="F-box domain"/>
    <property type="match status" value="1"/>
</dbReference>
<organism>
    <name type="scientific">Arabidopsis thaliana</name>
    <name type="common">Mouse-ear cress</name>
    <dbReference type="NCBI Taxonomy" id="3702"/>
    <lineage>
        <taxon>Eukaryota</taxon>
        <taxon>Viridiplantae</taxon>
        <taxon>Streptophyta</taxon>
        <taxon>Embryophyta</taxon>
        <taxon>Tracheophyta</taxon>
        <taxon>Spermatophyta</taxon>
        <taxon>Magnoliopsida</taxon>
        <taxon>eudicotyledons</taxon>
        <taxon>Gunneridae</taxon>
        <taxon>Pentapetalae</taxon>
        <taxon>rosids</taxon>
        <taxon>malvids</taxon>
        <taxon>Brassicales</taxon>
        <taxon>Brassicaceae</taxon>
        <taxon>Camelineae</taxon>
        <taxon>Arabidopsis</taxon>
    </lineage>
</organism>